<dbReference type="EC" id="1.14.19.-"/>
<dbReference type="EMBL" id="AP005416">
    <property type="protein sequence ID" value="BAD03577.1"/>
    <property type="status" value="ALT_INIT"/>
    <property type="molecule type" value="Genomic_DNA"/>
</dbReference>
<dbReference type="EMBL" id="AP008214">
    <property type="protein sequence ID" value="BAF23121.1"/>
    <property type="molecule type" value="Genomic_DNA"/>
</dbReference>
<dbReference type="EMBL" id="AP014964">
    <property type="protein sequence ID" value="BAT04247.1"/>
    <property type="molecule type" value="Genomic_DNA"/>
</dbReference>
<dbReference type="EMBL" id="AK105852">
    <property type="status" value="NOT_ANNOTATED_CDS"/>
    <property type="molecule type" value="mRNA"/>
</dbReference>
<dbReference type="RefSeq" id="XP_015650772.1">
    <property type="nucleotide sequence ID" value="XM_015795286.1"/>
</dbReference>
<dbReference type="SMR" id="Q0J7E4"/>
<dbReference type="FunCoup" id="Q0J7E4">
    <property type="interactions" value="55"/>
</dbReference>
<dbReference type="STRING" id="39947.Q0J7E4"/>
<dbReference type="PaxDb" id="39947-Q0J7E4"/>
<dbReference type="EnsemblPlants" id="Os08t0199400-01">
    <property type="protein sequence ID" value="Os08t0199400-01"/>
    <property type="gene ID" value="Os08g0199400"/>
</dbReference>
<dbReference type="Gramene" id="Os08t0199400-01">
    <property type="protein sequence ID" value="Os08t0199400-01"/>
    <property type="gene ID" value="Os08g0199400"/>
</dbReference>
<dbReference type="KEGG" id="dosa:Os08g0199400"/>
<dbReference type="eggNOG" id="ENOG502QRJK">
    <property type="taxonomic scope" value="Eukaryota"/>
</dbReference>
<dbReference type="HOGENOM" id="CLU_034505_1_0_1"/>
<dbReference type="InParanoid" id="Q0J7E4"/>
<dbReference type="OMA" id="CALPYKI"/>
<dbReference type="OrthoDB" id="589463at2759"/>
<dbReference type="UniPathway" id="UPA00199"/>
<dbReference type="Proteomes" id="UP000000763">
    <property type="component" value="Chromosome 8"/>
</dbReference>
<dbReference type="Proteomes" id="UP000059680">
    <property type="component" value="Chromosome 8"/>
</dbReference>
<dbReference type="GO" id="GO:0009507">
    <property type="term" value="C:chloroplast"/>
    <property type="evidence" value="ECO:0007669"/>
    <property type="project" value="UniProtKB-SubCell"/>
</dbReference>
<dbReference type="GO" id="GO:0046872">
    <property type="term" value="F:metal ion binding"/>
    <property type="evidence" value="ECO:0007669"/>
    <property type="project" value="UniProtKB-KW"/>
</dbReference>
<dbReference type="GO" id="GO:0045300">
    <property type="term" value="F:stearoyl-[ACP] desaturase activity"/>
    <property type="evidence" value="ECO:0000318"/>
    <property type="project" value="GO_Central"/>
</dbReference>
<dbReference type="GO" id="GO:0006633">
    <property type="term" value="P:fatty acid biosynthetic process"/>
    <property type="evidence" value="ECO:0007669"/>
    <property type="project" value="UniProtKB-KW"/>
</dbReference>
<dbReference type="GO" id="GO:0006631">
    <property type="term" value="P:fatty acid metabolic process"/>
    <property type="evidence" value="ECO:0000318"/>
    <property type="project" value="GO_Central"/>
</dbReference>
<dbReference type="CDD" id="cd01050">
    <property type="entry name" value="Acyl_ACP_Desat"/>
    <property type="match status" value="1"/>
</dbReference>
<dbReference type="FunFam" id="1.10.620.20:FF:000002">
    <property type="entry name" value="Stearoyl-[acyl-carrier-protein] 9-desaturase, chloroplastic"/>
    <property type="match status" value="1"/>
</dbReference>
<dbReference type="Gene3D" id="1.10.620.20">
    <property type="entry name" value="Ribonucleotide Reductase, subunit A"/>
    <property type="match status" value="1"/>
</dbReference>
<dbReference type="InterPro" id="IPR005067">
    <property type="entry name" value="Fatty_acid_desaturase-2"/>
</dbReference>
<dbReference type="InterPro" id="IPR009078">
    <property type="entry name" value="Ferritin-like_SF"/>
</dbReference>
<dbReference type="InterPro" id="IPR012348">
    <property type="entry name" value="RNR-like"/>
</dbReference>
<dbReference type="PANTHER" id="PTHR31155">
    <property type="entry name" value="ACYL- ACYL-CARRIER-PROTEIN DESATURASE-RELATED"/>
    <property type="match status" value="1"/>
</dbReference>
<dbReference type="PANTHER" id="PTHR31155:SF15">
    <property type="entry name" value="ACYL-[ACYL-CARRIER-PROTEIN] DESATURASE 6, CHLOROPLASTIC"/>
    <property type="match status" value="1"/>
</dbReference>
<dbReference type="Pfam" id="PF03405">
    <property type="entry name" value="FA_desaturase_2"/>
    <property type="match status" value="1"/>
</dbReference>
<dbReference type="PIRSF" id="PIRSF000346">
    <property type="entry name" value="Dlt9_acylACP_des"/>
    <property type="match status" value="1"/>
</dbReference>
<dbReference type="SUPFAM" id="SSF47240">
    <property type="entry name" value="Ferritin-like"/>
    <property type="match status" value="1"/>
</dbReference>
<evidence type="ECO:0000250" key="1">
    <source>
        <dbReference type="UniProtKB" id="P22337"/>
    </source>
</evidence>
<evidence type="ECO:0000255" key="2"/>
<evidence type="ECO:0000305" key="3"/>
<accession>Q0J7E4</accession>
<accession>A0A0P0XD46</accession>
<accession>Q6Z1J5</accession>
<reference key="1">
    <citation type="journal article" date="2005" name="Nature">
        <title>The map-based sequence of the rice genome.</title>
        <authorList>
            <consortium name="International rice genome sequencing project (IRGSP)"/>
        </authorList>
    </citation>
    <scope>NUCLEOTIDE SEQUENCE [LARGE SCALE GENOMIC DNA]</scope>
    <source>
        <strain>cv. Nipponbare</strain>
    </source>
</reference>
<reference key="2">
    <citation type="journal article" date="2008" name="Nucleic Acids Res.">
        <title>The rice annotation project database (RAP-DB): 2008 update.</title>
        <authorList>
            <consortium name="The rice annotation project (RAP)"/>
        </authorList>
    </citation>
    <scope>GENOME REANNOTATION</scope>
    <source>
        <strain>cv. Nipponbare</strain>
    </source>
</reference>
<reference key="3">
    <citation type="journal article" date="2013" name="Rice">
        <title>Improvement of the Oryza sativa Nipponbare reference genome using next generation sequence and optical map data.</title>
        <authorList>
            <person name="Kawahara Y."/>
            <person name="de la Bastide M."/>
            <person name="Hamilton J.P."/>
            <person name="Kanamori H."/>
            <person name="McCombie W.R."/>
            <person name="Ouyang S."/>
            <person name="Schwartz D.C."/>
            <person name="Tanaka T."/>
            <person name="Wu J."/>
            <person name="Zhou S."/>
            <person name="Childs K.L."/>
            <person name="Davidson R.M."/>
            <person name="Lin H."/>
            <person name="Quesada-Ocampo L."/>
            <person name="Vaillancourt B."/>
            <person name="Sakai H."/>
            <person name="Lee S.S."/>
            <person name="Kim J."/>
            <person name="Numa H."/>
            <person name="Itoh T."/>
            <person name="Buell C.R."/>
            <person name="Matsumoto T."/>
        </authorList>
    </citation>
    <scope>GENOME REANNOTATION</scope>
    <source>
        <strain>cv. Nipponbare</strain>
    </source>
</reference>
<reference key="4">
    <citation type="journal article" date="2003" name="Science">
        <title>Collection, mapping, and annotation of over 28,000 cDNA clones from japonica rice.</title>
        <authorList>
            <consortium name="The rice full-length cDNA consortium"/>
        </authorList>
    </citation>
    <scope>NUCLEOTIDE SEQUENCE [LARGE SCALE MRNA]</scope>
    <source>
        <strain>cv. Nipponbare</strain>
    </source>
</reference>
<reference key="5">
    <citation type="journal article" date="2009" name="Mol. Plant Microbe Interact.">
        <title>Suppression of the rice fatty-acid desaturase gene OsSSI2 enhances resistance to blast and leaf blight diseases in rice.</title>
        <authorList>
            <person name="Jiang C.J."/>
            <person name="Shimono M."/>
            <person name="Maeda S."/>
            <person name="Inoue H."/>
            <person name="Mori M."/>
            <person name="Hasegawa M."/>
            <person name="Sugano S."/>
            <person name="Takatsuji H."/>
        </authorList>
    </citation>
    <scope>GENE FAMILY</scope>
</reference>
<keyword id="KW-0150">Chloroplast</keyword>
<keyword id="KW-0275">Fatty acid biosynthesis</keyword>
<keyword id="KW-0276">Fatty acid metabolism</keyword>
<keyword id="KW-0408">Iron</keyword>
<keyword id="KW-0444">Lipid biosynthesis</keyword>
<keyword id="KW-0443">Lipid metabolism</keyword>
<keyword id="KW-0479">Metal-binding</keyword>
<keyword id="KW-0560">Oxidoreductase</keyword>
<keyword id="KW-0934">Plastid</keyword>
<keyword id="KW-1185">Reference proteome</keyword>
<keyword id="KW-0809">Transit peptide</keyword>
<proteinExistence type="evidence at transcript level"/>
<comment type="function">
    <text evidence="3">Introduces a cis double bond in the acyl chain of an acyl-[acyl-carrier protein].</text>
</comment>
<comment type="cofactor">
    <cofactor evidence="1">
        <name>Fe(2+)</name>
        <dbReference type="ChEBI" id="CHEBI:29033"/>
    </cofactor>
    <text evidence="1">Binds 2 Fe(2+) ions per subunit.</text>
</comment>
<comment type="pathway">
    <text>Lipid metabolism; fatty acid metabolism.</text>
</comment>
<comment type="subunit">
    <text evidence="1">Homodimer.</text>
</comment>
<comment type="subcellular location">
    <subcellularLocation>
        <location evidence="3">Plastid</location>
        <location evidence="3">Chloroplast</location>
    </subcellularLocation>
</comment>
<comment type="similarity">
    <text evidence="3">Belongs to the fatty acid desaturase type 2 family.</text>
</comment>
<comment type="sequence caution" evidence="3">
    <conflict type="erroneous initiation">
        <sequence resource="EMBL-CDS" id="BAD03577"/>
    </conflict>
    <text>Truncated N-terminus.</text>
</comment>
<name>STAD6_ORYSJ</name>
<gene>
    <name type="ordered locus">Os08g0199400</name>
    <name type="ordered locus">LOC_Os08g09950</name>
    <name type="ORF">OSJNBb0094P23.29</name>
</gene>
<feature type="transit peptide" description="Chloroplast" evidence="2">
    <location>
        <begin position="1"/>
        <end position="54"/>
    </location>
</feature>
<feature type="chain" id="PRO_0000401434" description="Acyl-[acyl-carrier-protein] desaturase 6, chloroplastic">
    <location>
        <begin position="55"/>
        <end position="419"/>
    </location>
</feature>
<feature type="binding site" evidence="1">
    <location>
        <position position="151"/>
    </location>
    <ligand>
        <name>Fe cation</name>
        <dbReference type="ChEBI" id="CHEBI:24875"/>
        <label>1</label>
    </ligand>
</feature>
<feature type="binding site" evidence="1">
    <location>
        <position position="189"/>
    </location>
    <ligand>
        <name>Fe cation</name>
        <dbReference type="ChEBI" id="CHEBI:24875"/>
        <label>1</label>
    </ligand>
</feature>
<feature type="binding site" evidence="1">
    <location>
        <position position="189"/>
    </location>
    <ligand>
        <name>Fe cation</name>
        <dbReference type="ChEBI" id="CHEBI:24875"/>
        <label>2</label>
    </ligand>
</feature>
<feature type="binding site" evidence="1">
    <location>
        <position position="192"/>
    </location>
    <ligand>
        <name>Fe cation</name>
        <dbReference type="ChEBI" id="CHEBI:24875"/>
        <label>1</label>
    </ligand>
</feature>
<feature type="binding site" evidence="1">
    <location>
        <position position="242"/>
    </location>
    <ligand>
        <name>Fe cation</name>
        <dbReference type="ChEBI" id="CHEBI:24875"/>
        <label>2</label>
    </ligand>
</feature>
<feature type="binding site" evidence="1">
    <location>
        <position position="277"/>
    </location>
    <ligand>
        <name>Fe cation</name>
        <dbReference type="ChEBI" id="CHEBI:24875"/>
        <label>1</label>
    </ligand>
</feature>
<feature type="binding site" evidence="1">
    <location>
        <position position="277"/>
    </location>
    <ligand>
        <name>Fe cation</name>
        <dbReference type="ChEBI" id="CHEBI:24875"/>
        <label>2</label>
    </ligand>
</feature>
<feature type="binding site" evidence="1">
    <location>
        <position position="280"/>
    </location>
    <ligand>
        <name>Fe cation</name>
        <dbReference type="ChEBI" id="CHEBI:24875"/>
        <label>2</label>
    </ligand>
</feature>
<feature type="sequence conflict" description="In Ref. 4; AK105852." evidence="3" ref="4">
    <original>R</original>
    <variation>W</variation>
    <location>
        <position position="64"/>
    </location>
</feature>
<organism>
    <name type="scientific">Oryza sativa subsp. japonica</name>
    <name type="common">Rice</name>
    <dbReference type="NCBI Taxonomy" id="39947"/>
    <lineage>
        <taxon>Eukaryota</taxon>
        <taxon>Viridiplantae</taxon>
        <taxon>Streptophyta</taxon>
        <taxon>Embryophyta</taxon>
        <taxon>Tracheophyta</taxon>
        <taxon>Spermatophyta</taxon>
        <taxon>Magnoliopsida</taxon>
        <taxon>Liliopsida</taxon>
        <taxon>Poales</taxon>
        <taxon>Poaceae</taxon>
        <taxon>BOP clade</taxon>
        <taxon>Oryzoideae</taxon>
        <taxon>Oryzeae</taxon>
        <taxon>Oryzinae</taxon>
        <taxon>Oryza</taxon>
        <taxon>Oryza sativa</taxon>
    </lineage>
</organism>
<protein>
    <recommendedName>
        <fullName>Acyl-[acyl-carrier-protein] desaturase 6, chloroplastic</fullName>
        <ecNumber>1.14.19.-</ecNumber>
    </recommendedName>
</protein>
<sequence length="419" mass="46101">MAATATMAMPLANRLRCKPNTNSSSPSRTLFGRRVTMISSSRWGSAVSGSAIMSAAADVAAAVRREEDEEMRSYLSPEKLEVLTQMEPWVEEHVLPLLKPVEAAWQPSDLLPDPAVLGGEGFHAACAELRERAAGVPDLLLVCLVANMVTEEALPTYQSSLNRVRAVGDLTGADATAWARWIRGWSAEENRHGDVLNRYMYLSGRFDMAEVERAVHRLIRSGMAVDPPCSPYHAFVYTAFQERATAVAHGNTARLVGARGHGDAALARVCGTVAADEKRHEAAYTRIVSRLLEADPDAGVRAVARMLRRGVAMPTSPISDGRRDDLYACVVSLAEQAGTYTVSDYCSIVEHLVREWRVEELAAGLSGEGRRARDYVCELPQKIRRMKEKAHERAVKAQKKPISIPINWIFDRHVSVMLP</sequence>